<proteinExistence type="inferred from homology"/>
<protein>
    <recommendedName>
        <fullName evidence="1">Protease HtpX homolog</fullName>
        <ecNumber evidence="1">3.4.24.-</ecNumber>
    </recommendedName>
</protein>
<evidence type="ECO:0000255" key="1">
    <source>
        <dbReference type="HAMAP-Rule" id="MF_00188"/>
    </source>
</evidence>
<name>HTPX_BORA1</name>
<feature type="chain" id="PRO_1000020851" description="Protease HtpX homolog">
    <location>
        <begin position="1"/>
        <end position="293"/>
    </location>
</feature>
<feature type="transmembrane region" description="Helical" evidence="1">
    <location>
        <begin position="4"/>
        <end position="24"/>
    </location>
</feature>
<feature type="transmembrane region" description="Helical" evidence="1">
    <location>
        <begin position="40"/>
        <end position="60"/>
    </location>
</feature>
<feature type="transmembrane region" description="Helical" evidence="1">
    <location>
        <begin position="161"/>
        <end position="181"/>
    </location>
</feature>
<feature type="transmembrane region" description="Helical" evidence="1">
    <location>
        <begin position="198"/>
        <end position="218"/>
    </location>
</feature>
<feature type="active site" evidence="1">
    <location>
        <position position="147"/>
    </location>
</feature>
<feature type="binding site" evidence="1">
    <location>
        <position position="146"/>
    </location>
    <ligand>
        <name>Zn(2+)</name>
        <dbReference type="ChEBI" id="CHEBI:29105"/>
        <note>catalytic</note>
    </ligand>
</feature>
<feature type="binding site" evidence="1">
    <location>
        <position position="150"/>
    </location>
    <ligand>
        <name>Zn(2+)</name>
        <dbReference type="ChEBI" id="CHEBI:29105"/>
        <note>catalytic</note>
    </ligand>
</feature>
<feature type="binding site" evidence="1">
    <location>
        <position position="223"/>
    </location>
    <ligand>
        <name>Zn(2+)</name>
        <dbReference type="ChEBI" id="CHEBI:29105"/>
        <note>catalytic</note>
    </ligand>
</feature>
<keyword id="KW-0997">Cell inner membrane</keyword>
<keyword id="KW-1003">Cell membrane</keyword>
<keyword id="KW-0378">Hydrolase</keyword>
<keyword id="KW-0472">Membrane</keyword>
<keyword id="KW-0479">Metal-binding</keyword>
<keyword id="KW-0482">Metalloprotease</keyword>
<keyword id="KW-0645">Protease</keyword>
<keyword id="KW-1185">Reference proteome</keyword>
<keyword id="KW-0812">Transmembrane</keyword>
<keyword id="KW-1133">Transmembrane helix</keyword>
<keyword id="KW-0862">Zinc</keyword>
<comment type="cofactor">
    <cofactor evidence="1">
        <name>Zn(2+)</name>
        <dbReference type="ChEBI" id="CHEBI:29105"/>
    </cofactor>
    <text evidence="1">Binds 1 zinc ion per subunit.</text>
</comment>
<comment type="subcellular location">
    <subcellularLocation>
        <location evidence="1">Cell inner membrane</location>
        <topology evidence="1">Multi-pass membrane protein</topology>
    </subcellularLocation>
</comment>
<comment type="similarity">
    <text evidence="1">Belongs to the peptidase M48B family.</text>
</comment>
<reference key="1">
    <citation type="journal article" date="2006" name="J. Bacteriol.">
        <title>Comparison of the genome sequence of the poultry pathogen Bordetella avium with those of B. bronchiseptica, B. pertussis, and B. parapertussis reveals extensive diversity in surface structures associated with host interaction.</title>
        <authorList>
            <person name="Sebaihia M."/>
            <person name="Preston A."/>
            <person name="Maskell D.J."/>
            <person name="Kuzmiak H."/>
            <person name="Connell T.D."/>
            <person name="King N.D."/>
            <person name="Orndorff P.E."/>
            <person name="Miyamoto D.M."/>
            <person name="Thomson N.R."/>
            <person name="Harris D."/>
            <person name="Goble A."/>
            <person name="Lord A."/>
            <person name="Murphy L."/>
            <person name="Quail M.A."/>
            <person name="Rutter S."/>
            <person name="Squares R."/>
            <person name="Squares S."/>
            <person name="Woodward J."/>
            <person name="Parkhill J."/>
            <person name="Temple L.M."/>
        </authorList>
    </citation>
    <scope>NUCLEOTIDE SEQUENCE [LARGE SCALE GENOMIC DNA]</scope>
    <source>
        <strain>197N</strain>
    </source>
</reference>
<organism>
    <name type="scientific">Bordetella avium (strain 197N)</name>
    <dbReference type="NCBI Taxonomy" id="360910"/>
    <lineage>
        <taxon>Bacteria</taxon>
        <taxon>Pseudomonadati</taxon>
        <taxon>Pseudomonadota</taxon>
        <taxon>Betaproteobacteria</taxon>
        <taxon>Burkholderiales</taxon>
        <taxon>Alcaligenaceae</taxon>
        <taxon>Bordetella</taxon>
    </lineage>
</organism>
<accession>Q2KZ03</accession>
<dbReference type="EC" id="3.4.24.-" evidence="1"/>
<dbReference type="EMBL" id="AM167904">
    <property type="protein sequence ID" value="CAJ49793.1"/>
    <property type="molecule type" value="Genomic_DNA"/>
</dbReference>
<dbReference type="RefSeq" id="WP_012417845.1">
    <property type="nucleotide sequence ID" value="NC_010645.1"/>
</dbReference>
<dbReference type="SMR" id="Q2KZ03"/>
<dbReference type="STRING" id="360910.BAV2184"/>
<dbReference type="MEROPS" id="M48.002"/>
<dbReference type="GeneID" id="92934755"/>
<dbReference type="KEGG" id="bav:BAV2184"/>
<dbReference type="eggNOG" id="COG0501">
    <property type="taxonomic scope" value="Bacteria"/>
</dbReference>
<dbReference type="HOGENOM" id="CLU_042266_1_0_4"/>
<dbReference type="OrthoDB" id="15218at2"/>
<dbReference type="Proteomes" id="UP000001977">
    <property type="component" value="Chromosome"/>
</dbReference>
<dbReference type="GO" id="GO:0005886">
    <property type="term" value="C:plasma membrane"/>
    <property type="evidence" value="ECO:0007669"/>
    <property type="project" value="UniProtKB-SubCell"/>
</dbReference>
<dbReference type="GO" id="GO:0004222">
    <property type="term" value="F:metalloendopeptidase activity"/>
    <property type="evidence" value="ECO:0007669"/>
    <property type="project" value="UniProtKB-UniRule"/>
</dbReference>
<dbReference type="GO" id="GO:0008270">
    <property type="term" value="F:zinc ion binding"/>
    <property type="evidence" value="ECO:0007669"/>
    <property type="project" value="UniProtKB-UniRule"/>
</dbReference>
<dbReference type="GO" id="GO:0006508">
    <property type="term" value="P:proteolysis"/>
    <property type="evidence" value="ECO:0007669"/>
    <property type="project" value="UniProtKB-KW"/>
</dbReference>
<dbReference type="CDD" id="cd07335">
    <property type="entry name" value="M48B_HtpX_like"/>
    <property type="match status" value="1"/>
</dbReference>
<dbReference type="Gene3D" id="3.30.2010.10">
    <property type="entry name" value="Metalloproteases ('zincins'), catalytic domain"/>
    <property type="match status" value="1"/>
</dbReference>
<dbReference type="HAMAP" id="MF_00188">
    <property type="entry name" value="Pept_M48_protease_HtpX"/>
    <property type="match status" value="1"/>
</dbReference>
<dbReference type="InterPro" id="IPR050083">
    <property type="entry name" value="HtpX_protease"/>
</dbReference>
<dbReference type="InterPro" id="IPR022919">
    <property type="entry name" value="Pept_M48_protease_HtpX"/>
</dbReference>
<dbReference type="InterPro" id="IPR001915">
    <property type="entry name" value="Peptidase_M48"/>
</dbReference>
<dbReference type="NCBIfam" id="NF003965">
    <property type="entry name" value="PRK05457.1"/>
    <property type="match status" value="1"/>
</dbReference>
<dbReference type="PANTHER" id="PTHR43221">
    <property type="entry name" value="PROTEASE HTPX"/>
    <property type="match status" value="1"/>
</dbReference>
<dbReference type="PANTHER" id="PTHR43221:SF1">
    <property type="entry name" value="PROTEASE HTPX"/>
    <property type="match status" value="1"/>
</dbReference>
<dbReference type="Pfam" id="PF01435">
    <property type="entry name" value="Peptidase_M48"/>
    <property type="match status" value="1"/>
</dbReference>
<sequence length="293" mass="31375">MKRVILFLITNLAVMLVLSATLRILGLDRFITAEGLNLNALLMFSLVVGFTGSFISLLISKPMAKYSTGAQVIDPNAPRSQREAWLLDTVYQLADRAGIGRPEVAIYEGAPNAFATGAFKNDALVAVSTGLLESMREEEVAAVLGHEVAHIANGDMVTLTLIQGVVNTFVVFLARVVGYFVDRTIFRTERGVGPGYYVTVIVCEIVFGVLASIIVAWFSRQREYRADAGAAQLLGAREPMIHALARLGGLEPGDLPKSFQASGIAGGGAISALFSSHPPIPARIAALQQMRLS</sequence>
<gene>
    <name evidence="1" type="primary">htpX</name>
    <name type="ordered locus">BAV2184</name>
</gene>